<protein>
    <recommendedName>
        <fullName>Platelet-activating factor receptor</fullName>
        <shortName>PAF-R</shortName>
        <shortName>PAFr</shortName>
    </recommendedName>
</protein>
<comment type="function">
    <text>Receptor for platelet activating factor, a chemotactic phospholipid mediator that possesses potent inflammatory, smooth-muscle contractile and hypotensive activity. Seems to mediate its action via a G protein that activates a phosphatidylinositol-calcium second messenger system.</text>
</comment>
<comment type="subunit">
    <text evidence="1">Interacts with ARRB1.</text>
</comment>
<comment type="subcellular location">
    <subcellularLocation>
        <location>Cell membrane</location>
        <topology>Multi-pass membrane protein</topology>
    </subcellularLocation>
</comment>
<comment type="tissue specificity">
    <text>Present in almost all organs including spleen, small intestine, kidney, lung, liver and brain.</text>
</comment>
<comment type="similarity">
    <text evidence="3">Belongs to the G-protein coupled receptor 1 family.</text>
</comment>
<name>PTAFR_RAT</name>
<sequence>MEQNGSFRVDSEFRYTLFPIVYSVIFVLGVVANGYVLWVFATLYPSKKLNEIKIFMVNLTVADLLFLMTLPLWIVYYSNEGDWIVHKFLCNLAGCLFFINTYCSVAFLGVITYNRYQAVAYPIKTAQATTRKRGITLSLVIWISIAATASYFLATDSTNVVPKKDGSGNITRCFEHYEPYSVPILVVHIFITSCFFLVFFLIFYCNMVIIHTLLTRPVRQQRKPEVKRRALWMVCTVLAVFVICFVPHHVVQLPWTLAELGYQTNFHQAINDAHQITLCLLSTNCVLDPVIYCFLTKKFRKHLSEKFYSMRSSRKCSRATSDTCTEVMMPANQTPVLPLKN</sequence>
<accession>P46002</accession>
<keyword id="KW-1003">Cell membrane</keyword>
<keyword id="KW-0145">Chemotaxis</keyword>
<keyword id="KW-1015">Disulfide bond</keyword>
<keyword id="KW-0297">G-protein coupled receptor</keyword>
<keyword id="KW-0325">Glycoprotein</keyword>
<keyword id="KW-0472">Membrane</keyword>
<keyword id="KW-0675">Receptor</keyword>
<keyword id="KW-1185">Reference proteome</keyword>
<keyword id="KW-0807">Transducer</keyword>
<keyword id="KW-0812">Transmembrane</keyword>
<keyword id="KW-1133">Transmembrane helix</keyword>
<organism>
    <name type="scientific">Rattus norvegicus</name>
    <name type="common">Rat</name>
    <dbReference type="NCBI Taxonomy" id="10116"/>
    <lineage>
        <taxon>Eukaryota</taxon>
        <taxon>Metazoa</taxon>
        <taxon>Chordata</taxon>
        <taxon>Craniata</taxon>
        <taxon>Vertebrata</taxon>
        <taxon>Euteleostomi</taxon>
        <taxon>Mammalia</taxon>
        <taxon>Eutheria</taxon>
        <taxon>Euarchontoglires</taxon>
        <taxon>Glires</taxon>
        <taxon>Rodentia</taxon>
        <taxon>Myomorpha</taxon>
        <taxon>Muroidea</taxon>
        <taxon>Muridae</taxon>
        <taxon>Murinae</taxon>
        <taxon>Rattus</taxon>
    </lineage>
</organism>
<reference key="1">
    <citation type="journal article" date="1994" name="Eur. J. Biochem.">
        <title>Cloning, expression and tissue distribution of rat platelet-activating-factor-receptor cDNA.</title>
        <authorList>
            <person name="Bito H."/>
            <person name="Honda Z."/>
            <person name="Nakamura M."/>
            <person name="Shimizu T."/>
        </authorList>
    </citation>
    <scope>NUCLEOTIDE SEQUENCE [MRNA]</scope>
    <source>
        <strain>Sprague-Dawley</strain>
        <tissue>Spleen</tissue>
    </source>
</reference>
<reference key="2">
    <citation type="journal article" date="2004" name="Genome Res.">
        <title>The status, quality, and expansion of the NIH full-length cDNA project: the Mammalian Gene Collection (MGC).</title>
        <authorList>
            <consortium name="The MGC Project Team"/>
        </authorList>
    </citation>
    <scope>NUCLEOTIDE SEQUENCE [LARGE SCALE MRNA]</scope>
    <source>
        <tissue>Lung</tissue>
    </source>
</reference>
<gene>
    <name type="primary">Ptafr</name>
</gene>
<proteinExistence type="evidence at transcript level"/>
<dbReference type="EMBL" id="U04740">
    <property type="protein sequence ID" value="AAA18422.1"/>
    <property type="molecule type" value="mRNA"/>
</dbReference>
<dbReference type="EMBL" id="BC072491">
    <property type="protein sequence ID" value="AAH72491.1"/>
    <property type="molecule type" value="mRNA"/>
</dbReference>
<dbReference type="PIR" id="S43252">
    <property type="entry name" value="S43252"/>
</dbReference>
<dbReference type="RefSeq" id="NP_001416711.1">
    <property type="nucleotide sequence ID" value="NM_001429782.1"/>
</dbReference>
<dbReference type="RefSeq" id="NP_001416713.1">
    <property type="nucleotide sequence ID" value="NM_001429784.1"/>
</dbReference>
<dbReference type="RefSeq" id="NP_445773.1">
    <property type="nucleotide sequence ID" value="NM_053321.3"/>
</dbReference>
<dbReference type="RefSeq" id="XP_006239125.1">
    <property type="nucleotide sequence ID" value="XM_006239063.3"/>
</dbReference>
<dbReference type="RefSeq" id="XP_006239126.1">
    <property type="nucleotide sequence ID" value="XM_006239064.4"/>
</dbReference>
<dbReference type="SMR" id="P46002"/>
<dbReference type="FunCoup" id="P46002">
    <property type="interactions" value="230"/>
</dbReference>
<dbReference type="STRING" id="10116.ENSRNOP00000017687"/>
<dbReference type="BindingDB" id="P46002"/>
<dbReference type="ChEMBL" id="CHEMBL4127"/>
<dbReference type="GlyCosmos" id="P46002">
    <property type="glycosylation" value="2 sites, No reported glycans"/>
</dbReference>
<dbReference type="GlyGen" id="P46002">
    <property type="glycosylation" value="2 sites"/>
</dbReference>
<dbReference type="PhosphoSitePlus" id="P46002"/>
<dbReference type="PaxDb" id="10116-ENSRNOP00000017687"/>
<dbReference type="Ensembl" id="ENSRNOT00000017687.5">
    <property type="protein sequence ID" value="ENSRNOP00000017687.3"/>
    <property type="gene ID" value="ENSRNOG00000013231.5"/>
</dbReference>
<dbReference type="Ensembl" id="ENSRNOT00000097551.1">
    <property type="protein sequence ID" value="ENSRNOP00000079229.1"/>
    <property type="gene ID" value="ENSRNOG00000013231.5"/>
</dbReference>
<dbReference type="Ensembl" id="ENSRNOT00000119353.1">
    <property type="protein sequence ID" value="ENSRNOP00000085904.1"/>
    <property type="gene ID" value="ENSRNOG00000013231.5"/>
</dbReference>
<dbReference type="GeneID" id="58949"/>
<dbReference type="KEGG" id="rno:58949"/>
<dbReference type="UCSC" id="RGD:61897">
    <property type="organism name" value="rat"/>
</dbReference>
<dbReference type="AGR" id="RGD:61897"/>
<dbReference type="CTD" id="5724"/>
<dbReference type="RGD" id="61897">
    <property type="gene designation" value="Ptafr"/>
</dbReference>
<dbReference type="eggNOG" id="ENOG502QTQI">
    <property type="taxonomic scope" value="Eukaryota"/>
</dbReference>
<dbReference type="GeneTree" id="ENSGT01110000267167"/>
<dbReference type="HOGENOM" id="CLU_009579_8_2_1"/>
<dbReference type="InParanoid" id="P46002"/>
<dbReference type="OMA" id="WNIVIIR"/>
<dbReference type="OrthoDB" id="5985406at2759"/>
<dbReference type="PhylomeDB" id="P46002"/>
<dbReference type="TreeFam" id="TF350009"/>
<dbReference type="Reactome" id="R-RNO-373076">
    <property type="pathway name" value="Class A/1 (Rhodopsin-like receptors)"/>
</dbReference>
<dbReference type="Reactome" id="R-RNO-416476">
    <property type="pathway name" value="G alpha (q) signalling events"/>
</dbReference>
<dbReference type="Reactome" id="R-RNO-6798695">
    <property type="pathway name" value="Neutrophil degranulation"/>
</dbReference>
<dbReference type="PRO" id="PR:P46002"/>
<dbReference type="Proteomes" id="UP000002494">
    <property type="component" value="Chromosome 5"/>
</dbReference>
<dbReference type="Bgee" id="ENSRNOG00000013231">
    <property type="expression patterns" value="Expressed in spleen and 17 other cell types or tissues"/>
</dbReference>
<dbReference type="GO" id="GO:0005886">
    <property type="term" value="C:plasma membrane"/>
    <property type="evidence" value="ECO:0007669"/>
    <property type="project" value="UniProtKB-SubCell"/>
</dbReference>
<dbReference type="GO" id="GO:0045028">
    <property type="term" value="F:G protein-coupled purinergic nucleotide receptor activity"/>
    <property type="evidence" value="ECO:0000318"/>
    <property type="project" value="GO_Central"/>
</dbReference>
<dbReference type="GO" id="GO:0001530">
    <property type="term" value="F:lipopolysaccharide binding"/>
    <property type="evidence" value="ECO:0000266"/>
    <property type="project" value="RGD"/>
</dbReference>
<dbReference type="GO" id="GO:0001875">
    <property type="term" value="F:lipopolysaccharide immune receptor activity"/>
    <property type="evidence" value="ECO:0000266"/>
    <property type="project" value="RGD"/>
</dbReference>
<dbReference type="GO" id="GO:0051019">
    <property type="term" value="F:mitogen-activated protein kinase binding"/>
    <property type="evidence" value="ECO:0000314"/>
    <property type="project" value="RGD"/>
</dbReference>
<dbReference type="GO" id="GO:0005543">
    <property type="term" value="F:phospholipid binding"/>
    <property type="evidence" value="ECO:0000266"/>
    <property type="project" value="RGD"/>
</dbReference>
<dbReference type="GO" id="GO:0004992">
    <property type="term" value="F:platelet activating factor receptor activity"/>
    <property type="evidence" value="ECO:0000266"/>
    <property type="project" value="RGD"/>
</dbReference>
<dbReference type="GO" id="GO:1904317">
    <property type="term" value="P:cellular response to 2-O-acetyl-1-O-hexadecyl-sn-glycero-3-phosphocholine"/>
    <property type="evidence" value="ECO:0000270"/>
    <property type="project" value="RGD"/>
</dbReference>
<dbReference type="GO" id="GO:0071320">
    <property type="term" value="P:cellular response to cAMP"/>
    <property type="evidence" value="ECO:0000270"/>
    <property type="project" value="RGD"/>
</dbReference>
<dbReference type="GO" id="GO:0071398">
    <property type="term" value="P:cellular response to fatty acid"/>
    <property type="evidence" value="ECO:0000270"/>
    <property type="project" value="RGD"/>
</dbReference>
<dbReference type="GO" id="GO:0071258">
    <property type="term" value="P:cellular response to gravity"/>
    <property type="evidence" value="ECO:0000270"/>
    <property type="project" value="RGD"/>
</dbReference>
<dbReference type="GO" id="GO:0006935">
    <property type="term" value="P:chemotaxis"/>
    <property type="evidence" value="ECO:0007669"/>
    <property type="project" value="UniProtKB-KW"/>
</dbReference>
<dbReference type="GO" id="GO:0007186">
    <property type="term" value="P:G protein-coupled receptor signaling pathway"/>
    <property type="evidence" value="ECO:0000315"/>
    <property type="project" value="RGD"/>
</dbReference>
<dbReference type="GO" id="GO:0006954">
    <property type="term" value="P:inflammatory response"/>
    <property type="evidence" value="ECO:0000266"/>
    <property type="project" value="RGD"/>
</dbReference>
<dbReference type="GO" id="GO:0032959">
    <property type="term" value="P:inositol trisphosphate biosynthetic process"/>
    <property type="evidence" value="ECO:0000266"/>
    <property type="project" value="RGD"/>
</dbReference>
<dbReference type="GO" id="GO:0045776">
    <property type="term" value="P:negative regulation of blood pressure"/>
    <property type="evidence" value="ECO:0000315"/>
    <property type="project" value="RGD"/>
</dbReference>
<dbReference type="GO" id="GO:0007567">
    <property type="term" value="P:parturition"/>
    <property type="evidence" value="ECO:0000315"/>
    <property type="project" value="RGD"/>
</dbReference>
<dbReference type="GO" id="GO:0007200">
    <property type="term" value="P:phospholipase C-activating G protein-coupled receptor signaling pathway"/>
    <property type="evidence" value="ECO:0000266"/>
    <property type="project" value="RGD"/>
</dbReference>
<dbReference type="GO" id="GO:0002693">
    <property type="term" value="P:positive regulation of cellular extravasation"/>
    <property type="evidence" value="ECO:0000315"/>
    <property type="project" value="RGD"/>
</dbReference>
<dbReference type="GO" id="GO:1904306">
    <property type="term" value="P:positive regulation of gastro-intestinal system smooth muscle contraction"/>
    <property type="evidence" value="ECO:0000315"/>
    <property type="project" value="RGD"/>
</dbReference>
<dbReference type="GO" id="GO:0060732">
    <property type="term" value="P:positive regulation of inositol phosphate biosynthetic process"/>
    <property type="evidence" value="ECO:0000314"/>
    <property type="project" value="RGD"/>
</dbReference>
<dbReference type="GO" id="GO:0032755">
    <property type="term" value="P:positive regulation of interleukin-6 production"/>
    <property type="evidence" value="ECO:0000315"/>
    <property type="project" value="RGD"/>
</dbReference>
<dbReference type="GO" id="GO:1903039">
    <property type="term" value="P:positive regulation of leukocyte cell-cell adhesion"/>
    <property type="evidence" value="ECO:0000315"/>
    <property type="project" value="RGD"/>
</dbReference>
<dbReference type="GO" id="GO:1903238">
    <property type="term" value="P:positive regulation of leukocyte tethering or rolling"/>
    <property type="evidence" value="ECO:0000315"/>
    <property type="project" value="RGD"/>
</dbReference>
<dbReference type="GO" id="GO:1904303">
    <property type="term" value="P:positive regulation of maternal process involved in parturition"/>
    <property type="evidence" value="ECO:0000315"/>
    <property type="project" value="RGD"/>
</dbReference>
<dbReference type="GO" id="GO:0043315">
    <property type="term" value="P:positive regulation of neutrophil degranulation"/>
    <property type="evidence" value="ECO:0000315"/>
    <property type="project" value="RGD"/>
</dbReference>
<dbReference type="GO" id="GO:0048661">
    <property type="term" value="P:positive regulation of smooth muscle cell proliferation"/>
    <property type="evidence" value="ECO:0000315"/>
    <property type="project" value="RGD"/>
</dbReference>
<dbReference type="GO" id="GO:0045987">
    <property type="term" value="P:positive regulation of smooth muscle contraction"/>
    <property type="evidence" value="ECO:0000315"/>
    <property type="project" value="RGD"/>
</dbReference>
<dbReference type="GO" id="GO:1904300">
    <property type="term" value="P:positive regulation of transcytosis"/>
    <property type="evidence" value="ECO:0000315"/>
    <property type="project" value="RGD"/>
</dbReference>
<dbReference type="GO" id="GO:0045727">
    <property type="term" value="P:positive regulation of translation"/>
    <property type="evidence" value="ECO:0000315"/>
    <property type="project" value="RGD"/>
</dbReference>
<dbReference type="GO" id="GO:0032760">
    <property type="term" value="P:positive regulation of tumor necrosis factor production"/>
    <property type="evidence" value="ECO:0000315"/>
    <property type="project" value="RGD"/>
</dbReference>
<dbReference type="GO" id="GO:0006357">
    <property type="term" value="P:regulation of transcription by RNA polymerase II"/>
    <property type="evidence" value="ECO:0000315"/>
    <property type="project" value="RGD"/>
</dbReference>
<dbReference type="GO" id="GO:1904316">
    <property type="term" value="P:response to 2-O-acetyl-1-O-hexadecyl-sn-glycero-3-phosphocholine"/>
    <property type="evidence" value="ECO:0000270"/>
    <property type="project" value="RGD"/>
</dbReference>
<dbReference type="GO" id="GO:0071548">
    <property type="term" value="P:response to dexamethasone"/>
    <property type="evidence" value="ECO:0000270"/>
    <property type="project" value="RGD"/>
</dbReference>
<dbReference type="GO" id="GO:0032496">
    <property type="term" value="P:response to lipopolysaccharide"/>
    <property type="evidence" value="ECO:0000270"/>
    <property type="project" value="RGD"/>
</dbReference>
<dbReference type="GO" id="GO:0046683">
    <property type="term" value="P:response to organophosphorus"/>
    <property type="evidence" value="ECO:0000270"/>
    <property type="project" value="RGD"/>
</dbReference>
<dbReference type="GO" id="GO:0009609">
    <property type="term" value="P:response to symbiotic bacterium"/>
    <property type="evidence" value="ECO:0000270"/>
    <property type="project" value="RGD"/>
</dbReference>
<dbReference type="GO" id="GO:0045056">
    <property type="term" value="P:transcytosis"/>
    <property type="evidence" value="ECO:0000315"/>
    <property type="project" value="RGD"/>
</dbReference>
<dbReference type="CDD" id="cd15147">
    <property type="entry name" value="7tmA_PAFR"/>
    <property type="match status" value="1"/>
</dbReference>
<dbReference type="FunFam" id="1.20.1070.10:FF:000204">
    <property type="entry name" value="platelet-activating factor receptor"/>
    <property type="match status" value="1"/>
</dbReference>
<dbReference type="Gene3D" id="1.20.1070.10">
    <property type="entry name" value="Rhodopsin 7-helix transmembrane proteins"/>
    <property type="match status" value="1"/>
</dbReference>
<dbReference type="InterPro" id="IPR000276">
    <property type="entry name" value="GPCR_Rhodpsn"/>
</dbReference>
<dbReference type="InterPro" id="IPR017452">
    <property type="entry name" value="GPCR_Rhodpsn_7TM"/>
</dbReference>
<dbReference type="InterPro" id="IPR002282">
    <property type="entry name" value="PAF_rcpt"/>
</dbReference>
<dbReference type="PANTHER" id="PTHR24233">
    <property type="entry name" value="P2Y PURINOCEPTOR-RELATED G-PROTEIN COUPLED RECEPTOR"/>
    <property type="match status" value="1"/>
</dbReference>
<dbReference type="PANTHER" id="PTHR24233:SF6">
    <property type="entry name" value="PLATELET-ACTIVATING FACTOR RECEPTOR"/>
    <property type="match status" value="1"/>
</dbReference>
<dbReference type="Pfam" id="PF00001">
    <property type="entry name" value="7tm_1"/>
    <property type="match status" value="1"/>
</dbReference>
<dbReference type="PRINTS" id="PR00237">
    <property type="entry name" value="GPCRRHODOPSN"/>
</dbReference>
<dbReference type="PRINTS" id="PR01153">
    <property type="entry name" value="PAFRECEPTOR"/>
</dbReference>
<dbReference type="SUPFAM" id="SSF81321">
    <property type="entry name" value="Family A G protein-coupled receptor-like"/>
    <property type="match status" value="1"/>
</dbReference>
<dbReference type="PROSITE" id="PS00237">
    <property type="entry name" value="G_PROTEIN_RECEP_F1_1"/>
    <property type="match status" value="1"/>
</dbReference>
<dbReference type="PROSITE" id="PS50262">
    <property type="entry name" value="G_PROTEIN_RECEP_F1_2"/>
    <property type="match status" value="1"/>
</dbReference>
<evidence type="ECO:0000250" key="1"/>
<evidence type="ECO:0000255" key="2"/>
<evidence type="ECO:0000255" key="3">
    <source>
        <dbReference type="PROSITE-ProRule" id="PRU00521"/>
    </source>
</evidence>
<feature type="chain" id="PRO_0000070096" description="Platelet-activating factor receptor">
    <location>
        <begin position="1"/>
        <end position="341"/>
    </location>
</feature>
<feature type="topological domain" description="Extracellular" evidence="2">
    <location>
        <begin position="1"/>
        <end position="16"/>
    </location>
</feature>
<feature type="transmembrane region" description="Helical; Name=1" evidence="2">
    <location>
        <begin position="17"/>
        <end position="38"/>
    </location>
</feature>
<feature type="topological domain" description="Cytoplasmic" evidence="2">
    <location>
        <begin position="39"/>
        <end position="54"/>
    </location>
</feature>
<feature type="transmembrane region" description="Helical; Name=2" evidence="2">
    <location>
        <begin position="55"/>
        <end position="74"/>
    </location>
</feature>
<feature type="topological domain" description="Extracellular" evidence="2">
    <location>
        <begin position="75"/>
        <end position="91"/>
    </location>
</feature>
<feature type="transmembrane region" description="Helical; Name=3" evidence="2">
    <location>
        <begin position="92"/>
        <end position="113"/>
    </location>
</feature>
<feature type="topological domain" description="Cytoplasmic" evidence="2">
    <location>
        <begin position="114"/>
        <end position="133"/>
    </location>
</feature>
<feature type="transmembrane region" description="Helical; Name=4" evidence="2">
    <location>
        <begin position="134"/>
        <end position="155"/>
    </location>
</feature>
<feature type="topological domain" description="Extracellular" evidence="2">
    <location>
        <begin position="156"/>
        <end position="184"/>
    </location>
</feature>
<feature type="transmembrane region" description="Helical; Name=5" evidence="2">
    <location>
        <begin position="185"/>
        <end position="205"/>
    </location>
</feature>
<feature type="topological domain" description="Cytoplasmic" evidence="2">
    <location>
        <begin position="206"/>
        <end position="233"/>
    </location>
</feature>
<feature type="transmembrane region" description="Helical; Name=6" evidence="2">
    <location>
        <begin position="234"/>
        <end position="254"/>
    </location>
</feature>
<feature type="topological domain" description="Extracellular" evidence="2">
    <location>
        <begin position="255"/>
        <end position="275"/>
    </location>
</feature>
<feature type="transmembrane region" description="Helical; Name=7" evidence="2">
    <location>
        <begin position="276"/>
        <end position="295"/>
    </location>
</feature>
<feature type="topological domain" description="Cytoplasmic" evidence="2">
    <location>
        <begin position="296"/>
        <end position="341"/>
    </location>
</feature>
<feature type="glycosylation site" description="N-linked (GlcNAc...) asparagine" evidence="2">
    <location>
        <position position="4"/>
    </location>
</feature>
<feature type="glycosylation site" description="N-linked (GlcNAc...) asparagine" evidence="2">
    <location>
        <position position="169"/>
    </location>
</feature>
<feature type="disulfide bond" evidence="3">
    <location>
        <begin position="90"/>
        <end position="173"/>
    </location>
</feature>